<sequence>MNDQLSRAMRLLSQRDHSESELRRKLAAPPFSAKGNWGKRSGAKSSDVVESNLVESNPVESNLAESNAIEESDPQVIEQVIDYCYQHNWLDDSRFAASYINSRSRKGYGVQRIRSELMQKGVDKERILAAFENSEIDWCQLAKEVAQRKFSETLPVEWKEKAKVQRYLLYRGFFQEEIQSIYTDSVE</sequence>
<feature type="chain" id="PRO_1000065236" description="Regulatory protein RecX">
    <location>
        <begin position="1"/>
        <end position="187"/>
    </location>
</feature>
<feature type="region of interest" description="Disordered" evidence="2">
    <location>
        <begin position="1"/>
        <end position="44"/>
    </location>
</feature>
<feature type="compositionally biased region" description="Basic and acidic residues" evidence="2">
    <location>
        <begin position="13"/>
        <end position="24"/>
    </location>
</feature>
<reference key="1">
    <citation type="submission" date="2007-02" db="EMBL/GenBank/DDBJ databases">
        <title>Complete sequence of chromosome of Yersinia pestis Pestoides F.</title>
        <authorList>
            <consortium name="US DOE Joint Genome Institute"/>
            <person name="Copeland A."/>
            <person name="Lucas S."/>
            <person name="Lapidus A."/>
            <person name="Barry K."/>
            <person name="Detter J.C."/>
            <person name="Glavina del Rio T."/>
            <person name="Hammon N."/>
            <person name="Israni S."/>
            <person name="Dalin E."/>
            <person name="Tice H."/>
            <person name="Pitluck S."/>
            <person name="Di Bartolo G."/>
            <person name="Chain P."/>
            <person name="Malfatti S."/>
            <person name="Shin M."/>
            <person name="Vergez L."/>
            <person name="Schmutz J."/>
            <person name="Larimer F."/>
            <person name="Land M."/>
            <person name="Hauser L."/>
            <person name="Worsham P."/>
            <person name="Chu M."/>
            <person name="Bearden S."/>
            <person name="Garcia E."/>
            <person name="Richardson P."/>
        </authorList>
    </citation>
    <scope>NUCLEOTIDE SEQUENCE [LARGE SCALE GENOMIC DNA]</scope>
    <source>
        <strain>Pestoides F</strain>
    </source>
</reference>
<organism>
    <name type="scientific">Yersinia pestis (strain Pestoides F)</name>
    <dbReference type="NCBI Taxonomy" id="386656"/>
    <lineage>
        <taxon>Bacteria</taxon>
        <taxon>Pseudomonadati</taxon>
        <taxon>Pseudomonadota</taxon>
        <taxon>Gammaproteobacteria</taxon>
        <taxon>Enterobacterales</taxon>
        <taxon>Yersiniaceae</taxon>
        <taxon>Yersinia</taxon>
    </lineage>
</organism>
<name>RECX_YERPP</name>
<comment type="function">
    <text evidence="1">Modulates RecA activity.</text>
</comment>
<comment type="subcellular location">
    <subcellularLocation>
        <location evidence="1">Cytoplasm</location>
    </subcellularLocation>
</comment>
<comment type="similarity">
    <text evidence="1">Belongs to the RecX family.</text>
</comment>
<proteinExistence type="inferred from homology"/>
<dbReference type="EMBL" id="CP000668">
    <property type="protein sequence ID" value="ABP41413.1"/>
    <property type="molecule type" value="Genomic_DNA"/>
</dbReference>
<dbReference type="RefSeq" id="WP_002209447.1">
    <property type="nucleotide sequence ID" value="NZ_CP009715.1"/>
</dbReference>
<dbReference type="SMR" id="A4TQ51"/>
<dbReference type="GeneID" id="57975403"/>
<dbReference type="KEGG" id="ypp:YPDSF_3055"/>
<dbReference type="PATRIC" id="fig|386656.14.peg.1305"/>
<dbReference type="GO" id="GO:0005737">
    <property type="term" value="C:cytoplasm"/>
    <property type="evidence" value="ECO:0007669"/>
    <property type="project" value="UniProtKB-SubCell"/>
</dbReference>
<dbReference type="GO" id="GO:0006282">
    <property type="term" value="P:regulation of DNA repair"/>
    <property type="evidence" value="ECO:0007669"/>
    <property type="project" value="UniProtKB-UniRule"/>
</dbReference>
<dbReference type="Gene3D" id="1.10.10.10">
    <property type="entry name" value="Winged helix-like DNA-binding domain superfamily/Winged helix DNA-binding domain"/>
    <property type="match status" value="3"/>
</dbReference>
<dbReference type="HAMAP" id="MF_01114">
    <property type="entry name" value="RecX"/>
    <property type="match status" value="1"/>
</dbReference>
<dbReference type="InterPro" id="IPR053924">
    <property type="entry name" value="RecX_HTH_2nd"/>
</dbReference>
<dbReference type="InterPro" id="IPR053925">
    <property type="entry name" value="RecX_HTH_3rd"/>
</dbReference>
<dbReference type="InterPro" id="IPR003783">
    <property type="entry name" value="Regulatory_RecX"/>
</dbReference>
<dbReference type="InterPro" id="IPR036388">
    <property type="entry name" value="WH-like_DNA-bd_sf"/>
</dbReference>
<dbReference type="NCBIfam" id="NF001053">
    <property type="entry name" value="PRK00117.1-3"/>
    <property type="match status" value="1"/>
</dbReference>
<dbReference type="PANTHER" id="PTHR33602">
    <property type="entry name" value="REGULATORY PROTEIN RECX FAMILY PROTEIN"/>
    <property type="match status" value="1"/>
</dbReference>
<dbReference type="PANTHER" id="PTHR33602:SF1">
    <property type="entry name" value="REGULATORY PROTEIN RECX FAMILY PROTEIN"/>
    <property type="match status" value="1"/>
</dbReference>
<dbReference type="Pfam" id="PF02631">
    <property type="entry name" value="RecX_HTH2"/>
    <property type="match status" value="1"/>
</dbReference>
<dbReference type="Pfam" id="PF21981">
    <property type="entry name" value="RecX_HTH3"/>
    <property type="match status" value="1"/>
</dbReference>
<gene>
    <name evidence="1" type="primary">recX</name>
    <name type="ordered locus">YPDSF_3055</name>
</gene>
<protein>
    <recommendedName>
        <fullName evidence="1">Regulatory protein RecX</fullName>
    </recommendedName>
</protein>
<evidence type="ECO:0000255" key="1">
    <source>
        <dbReference type="HAMAP-Rule" id="MF_01114"/>
    </source>
</evidence>
<evidence type="ECO:0000256" key="2">
    <source>
        <dbReference type="SAM" id="MobiDB-lite"/>
    </source>
</evidence>
<accession>A4TQ51</accession>
<keyword id="KW-0963">Cytoplasm</keyword>